<gene>
    <name evidence="1" type="primary">phnC</name>
</gene>
<feature type="chain" id="PRO_0000092684" description="Phosphonates import ATP-binding protein PhnC">
    <location>
        <begin position="1"/>
        <end position="276"/>
    </location>
</feature>
<feature type="domain" description="ABC transporter" evidence="1">
    <location>
        <begin position="2"/>
        <end position="246"/>
    </location>
</feature>
<feature type="binding site" evidence="1">
    <location>
        <begin position="35"/>
        <end position="42"/>
    </location>
    <ligand>
        <name>ATP</name>
        <dbReference type="ChEBI" id="CHEBI:30616"/>
    </ligand>
</feature>
<protein>
    <recommendedName>
        <fullName evidence="1">Phosphonates import ATP-binding protein PhnC</fullName>
        <ecNumber evidence="1">7.3.2.2</ecNumber>
    </recommendedName>
</protein>
<accession>Q6WB63</accession>
<reference key="1">
    <citation type="submission" date="2003-04" db="EMBL/GenBank/DDBJ databases">
        <title>Genes for arsenite oxidation from Alcaligenes faecalis.</title>
        <authorList>
            <person name="Silver S."/>
            <person name="Phung L.T."/>
            <person name="Malo B.J."/>
        </authorList>
    </citation>
    <scope>NUCLEOTIDE SEQUENCE [GENOMIC DNA]</scope>
    <source>
        <strain>CCUG 2071 / LMG 3368 / NCIMB 8687</strain>
    </source>
</reference>
<name>PHNC_ALCFA</name>
<keyword id="KW-0067">ATP-binding</keyword>
<keyword id="KW-0997">Cell inner membrane</keyword>
<keyword id="KW-1003">Cell membrane</keyword>
<keyword id="KW-0472">Membrane</keyword>
<keyword id="KW-0547">Nucleotide-binding</keyword>
<keyword id="KW-0918">Phosphonate transport</keyword>
<keyword id="KW-1278">Translocase</keyword>
<keyword id="KW-0813">Transport</keyword>
<comment type="function">
    <text evidence="1">Part of the ABC transporter complex PhnCDE involved in phosphonates import. Responsible for energy coupling to the transport system.</text>
</comment>
<comment type="catalytic activity">
    <reaction evidence="1">
        <text>phosphonate(out) + ATP + H2O = phosphonate(in) + ADP + phosphate + H(+)</text>
        <dbReference type="Rhea" id="RHEA:18065"/>
        <dbReference type="ChEBI" id="CHEBI:15377"/>
        <dbReference type="ChEBI" id="CHEBI:15378"/>
        <dbReference type="ChEBI" id="CHEBI:16215"/>
        <dbReference type="ChEBI" id="CHEBI:30616"/>
        <dbReference type="ChEBI" id="CHEBI:43474"/>
        <dbReference type="ChEBI" id="CHEBI:456216"/>
        <dbReference type="EC" id="7.3.2.2"/>
    </reaction>
</comment>
<comment type="subunit">
    <text evidence="1">The complex is composed of two ATP-binding proteins (PhnC), two transmembrane proteins (PhnE) and a solute-binding protein (PhnD).</text>
</comment>
<comment type="subcellular location">
    <subcellularLocation>
        <location evidence="1">Cell inner membrane</location>
        <topology evidence="1">Peripheral membrane protein</topology>
    </subcellularLocation>
</comment>
<comment type="similarity">
    <text evidence="1">Belongs to the ABC transporter superfamily. Phosphonates importer (TC 3.A.1.9.1) family.</text>
</comment>
<sequence>MLEIHNLQKSYSTGDKALKGVNLSVQPGELLGLIGPSGAGKSTLIRCVNRLVEPSEGRVLLNGKDLANLGRHDLRMARRRIGMIFQEYALVERLTVMENLLSGRLGYSGFWPSWFRRFSPEDIRLAYALLERVGLDGMHNKRADALSGGQRQRVGIARALMQKPDLLLVDEPTASLDPKTSRQVMRLVLELCREHGLSAIINIHDVVLATEYLPRIVGLRAGAVVYDGPASAIDTHVLTRIYGAEDWSSITDRMTGTTVPGDEQAARVATIAIAAE</sequence>
<proteinExistence type="inferred from homology"/>
<organism>
    <name type="scientific">Alcaligenes faecalis</name>
    <dbReference type="NCBI Taxonomy" id="511"/>
    <lineage>
        <taxon>Bacteria</taxon>
        <taxon>Pseudomonadati</taxon>
        <taxon>Pseudomonadota</taxon>
        <taxon>Betaproteobacteria</taxon>
        <taxon>Burkholderiales</taxon>
        <taxon>Alcaligenaceae</taxon>
        <taxon>Alcaligenes</taxon>
    </lineage>
</organism>
<evidence type="ECO:0000255" key="1">
    <source>
        <dbReference type="HAMAP-Rule" id="MF_01713"/>
    </source>
</evidence>
<dbReference type="EC" id="7.3.2.2" evidence="1"/>
<dbReference type="EMBL" id="AY297781">
    <property type="protein sequence ID" value="AAQ19835.1"/>
    <property type="molecule type" value="Genomic_DNA"/>
</dbReference>
<dbReference type="SMR" id="Q6WB63"/>
<dbReference type="GO" id="GO:0005886">
    <property type="term" value="C:plasma membrane"/>
    <property type="evidence" value="ECO:0007669"/>
    <property type="project" value="UniProtKB-SubCell"/>
</dbReference>
<dbReference type="GO" id="GO:0015416">
    <property type="term" value="F:ABC-type phosphonate transporter activity"/>
    <property type="evidence" value="ECO:0007669"/>
    <property type="project" value="UniProtKB-EC"/>
</dbReference>
<dbReference type="GO" id="GO:0005524">
    <property type="term" value="F:ATP binding"/>
    <property type="evidence" value="ECO:0007669"/>
    <property type="project" value="UniProtKB-KW"/>
</dbReference>
<dbReference type="GO" id="GO:0016887">
    <property type="term" value="F:ATP hydrolysis activity"/>
    <property type="evidence" value="ECO:0007669"/>
    <property type="project" value="InterPro"/>
</dbReference>
<dbReference type="CDD" id="cd03256">
    <property type="entry name" value="ABC_PhnC_transporter"/>
    <property type="match status" value="1"/>
</dbReference>
<dbReference type="Gene3D" id="3.40.50.300">
    <property type="entry name" value="P-loop containing nucleotide triphosphate hydrolases"/>
    <property type="match status" value="1"/>
</dbReference>
<dbReference type="InterPro" id="IPR003593">
    <property type="entry name" value="AAA+_ATPase"/>
</dbReference>
<dbReference type="InterPro" id="IPR003439">
    <property type="entry name" value="ABC_transporter-like_ATP-bd"/>
</dbReference>
<dbReference type="InterPro" id="IPR017871">
    <property type="entry name" value="ABC_transporter-like_CS"/>
</dbReference>
<dbReference type="InterPro" id="IPR012693">
    <property type="entry name" value="ABC_transpr_PhnC"/>
</dbReference>
<dbReference type="InterPro" id="IPR050086">
    <property type="entry name" value="MetN_ABC_transporter-like"/>
</dbReference>
<dbReference type="InterPro" id="IPR027417">
    <property type="entry name" value="P-loop_NTPase"/>
</dbReference>
<dbReference type="NCBIfam" id="TIGR02315">
    <property type="entry name" value="ABC_phnC"/>
    <property type="match status" value="1"/>
</dbReference>
<dbReference type="PANTHER" id="PTHR43166">
    <property type="entry name" value="AMINO ACID IMPORT ATP-BINDING PROTEIN"/>
    <property type="match status" value="1"/>
</dbReference>
<dbReference type="PANTHER" id="PTHR43166:SF6">
    <property type="entry name" value="PHOSPHONATES IMPORT ATP-BINDING PROTEIN PHNC"/>
    <property type="match status" value="1"/>
</dbReference>
<dbReference type="Pfam" id="PF00005">
    <property type="entry name" value="ABC_tran"/>
    <property type="match status" value="1"/>
</dbReference>
<dbReference type="SMART" id="SM00382">
    <property type="entry name" value="AAA"/>
    <property type="match status" value="1"/>
</dbReference>
<dbReference type="SUPFAM" id="SSF52540">
    <property type="entry name" value="P-loop containing nucleoside triphosphate hydrolases"/>
    <property type="match status" value="1"/>
</dbReference>
<dbReference type="PROSITE" id="PS00211">
    <property type="entry name" value="ABC_TRANSPORTER_1"/>
    <property type="match status" value="1"/>
</dbReference>
<dbReference type="PROSITE" id="PS50893">
    <property type="entry name" value="ABC_TRANSPORTER_2"/>
    <property type="match status" value="1"/>
</dbReference>
<dbReference type="PROSITE" id="PS51249">
    <property type="entry name" value="PHNC"/>
    <property type="match status" value="1"/>
</dbReference>